<reference key="1">
    <citation type="journal article" date="2006" name="Nature">
        <title>Global trends of whole-genome duplications revealed by the ciliate Paramecium tetraurelia.</title>
        <authorList>
            <person name="Aury J.-M."/>
            <person name="Jaillon O."/>
            <person name="Duret L."/>
            <person name="Noel B."/>
            <person name="Jubin C."/>
            <person name="Porcel B.M."/>
            <person name="Segurens B."/>
            <person name="Daubin V."/>
            <person name="Anthouard V."/>
            <person name="Aiach N."/>
            <person name="Arnaiz O."/>
            <person name="Billaut A."/>
            <person name="Beisson J."/>
            <person name="Blanc I."/>
            <person name="Bouhouche K."/>
            <person name="Camara F."/>
            <person name="Duharcourt S."/>
            <person name="Guigo R."/>
            <person name="Gogendeau D."/>
            <person name="Katinka M."/>
            <person name="Keller A.-M."/>
            <person name="Kissmehl R."/>
            <person name="Klotz C."/>
            <person name="Koll F."/>
            <person name="Le Mouel A."/>
            <person name="Lepere G."/>
            <person name="Malinsky S."/>
            <person name="Nowacki M."/>
            <person name="Nowak J.K."/>
            <person name="Plattner H."/>
            <person name="Poulain J."/>
            <person name="Ruiz F."/>
            <person name="Serrano V."/>
            <person name="Zagulski M."/>
            <person name="Dessen P."/>
            <person name="Betermier M."/>
            <person name="Weissenbach J."/>
            <person name="Scarpelli C."/>
            <person name="Schaechter V."/>
            <person name="Sperling L."/>
            <person name="Meyer E."/>
            <person name="Cohen J."/>
            <person name="Wincker P."/>
        </authorList>
    </citation>
    <scope>NUCLEOTIDE SEQUENCE [LARGE SCALE GENOMIC DNA]</scope>
    <source>
        <strain>Stock d4-2</strain>
    </source>
</reference>
<reference key="2">
    <citation type="journal article" date="1996" name="Eur. J. Biochem.">
        <title>Cathepsin L is an intracellular and extracellular protease in Paramecium tetraurelia: purification, cloning, sequencing and specific inhibition by its expressed propeptide.</title>
        <authorList>
            <person name="Voelkel H."/>
            <person name="Kurz U."/>
            <person name="Linder J."/>
            <person name="Klumpp S."/>
            <person name="Gnau V."/>
            <person name="Jung G."/>
            <person name="Schultz J.E."/>
        </authorList>
    </citation>
    <scope>NUCLEOTIDE SEQUENCE [MRNA] OF 15-308</scope>
    <source>
        <strain>Stock 51</strain>
    </source>
</reference>
<accession>Q94715</accession>
<accession>A0E163</accession>
<sequence length="308" mass="35189">MKQFLTAAIVTLLMTAGYYHLQEDDTNDFERWALKNNKFYTESEKLYRMEIYNSNKRMIEEHNQREDVTYQMGENQFMTLSHEEFVDLYLQKSDSSVNIMGASLPEVQLEGLGAVDWRNYTTVKEQGQCASGWAFSVSNSLEAWYAIRGFQKINASTQQIVDCDYNNTGCSGGYNAYAMEYVLRVGLVSSTNYPYVAKNQTCKQSRNGTYFINGYSFVGGSQSNLQYYLNNYPISVGVEASNWQFYRSGLFSNCSSNGTNHYALAVGFDSANNWIVQNSWGTQWGESGNIRLYPQNTCGILNYPYQVY</sequence>
<organism>
    <name type="scientific">Paramecium tetraurelia</name>
    <dbReference type="NCBI Taxonomy" id="5888"/>
    <lineage>
        <taxon>Eukaryota</taxon>
        <taxon>Sar</taxon>
        <taxon>Alveolata</taxon>
        <taxon>Ciliophora</taxon>
        <taxon>Intramacronucleata</taxon>
        <taxon>Oligohymenophorea</taxon>
        <taxon>Peniculida</taxon>
        <taxon>Parameciidae</taxon>
        <taxon>Paramecium</taxon>
    </lineage>
</organism>
<evidence type="ECO:0000250" key="1"/>
<evidence type="ECO:0000255" key="2"/>
<evidence type="ECO:0000305" key="3"/>
<dbReference type="EC" id="3.4.22.15"/>
<dbReference type="EMBL" id="CT868652">
    <property type="protein sequence ID" value="CAK89030.1"/>
    <property type="molecule type" value="Genomic_DNA"/>
</dbReference>
<dbReference type="EMBL" id="X91756">
    <property type="protein sequence ID" value="CAA62871.1"/>
    <property type="molecule type" value="mRNA"/>
</dbReference>
<dbReference type="PIR" id="S68784">
    <property type="entry name" value="S68784"/>
</dbReference>
<dbReference type="RefSeq" id="XP_001456427.1">
    <property type="nucleotide sequence ID" value="XM_001456390.2"/>
</dbReference>
<dbReference type="SMR" id="Q94715"/>
<dbReference type="STRING" id="5888.Q94715"/>
<dbReference type="BindingDB" id="Q94715"/>
<dbReference type="ChEMBL" id="CHEMBL4097"/>
<dbReference type="EnsemblProtists" id="CAK89030">
    <property type="protein sequence ID" value="CAK89030"/>
    <property type="gene ID" value="GSPATT00022199001"/>
</dbReference>
<dbReference type="GeneID" id="5042212"/>
<dbReference type="KEGG" id="ptm:GSPATT00022199001"/>
<dbReference type="eggNOG" id="KOG1543">
    <property type="taxonomic scope" value="Eukaryota"/>
</dbReference>
<dbReference type="HOGENOM" id="CLU_012184_1_3_1"/>
<dbReference type="InParanoid" id="Q94715"/>
<dbReference type="OMA" id="NAYAMEY"/>
<dbReference type="OrthoDB" id="387093at2759"/>
<dbReference type="PRO" id="PR:Q94715"/>
<dbReference type="Proteomes" id="UP000000600">
    <property type="component" value="Partially assembled WGS sequence"/>
</dbReference>
<dbReference type="GO" id="GO:0005615">
    <property type="term" value="C:extracellular space"/>
    <property type="evidence" value="ECO:0000318"/>
    <property type="project" value="GO_Central"/>
</dbReference>
<dbReference type="GO" id="GO:0005764">
    <property type="term" value="C:lysosome"/>
    <property type="evidence" value="ECO:0000318"/>
    <property type="project" value="GO_Central"/>
</dbReference>
<dbReference type="GO" id="GO:0004197">
    <property type="term" value="F:cysteine-type endopeptidase activity"/>
    <property type="evidence" value="ECO:0000318"/>
    <property type="project" value="GO_Central"/>
</dbReference>
<dbReference type="GO" id="GO:0051603">
    <property type="term" value="P:proteolysis involved in protein catabolic process"/>
    <property type="evidence" value="ECO:0000318"/>
    <property type="project" value="GO_Central"/>
</dbReference>
<dbReference type="CDD" id="cd02248">
    <property type="entry name" value="Peptidase_C1A"/>
    <property type="match status" value="1"/>
</dbReference>
<dbReference type="FunFam" id="3.90.70.10:FF:000104">
    <property type="entry name" value="Cathepsin L 1"/>
    <property type="match status" value="1"/>
</dbReference>
<dbReference type="Gene3D" id="3.90.70.10">
    <property type="entry name" value="Cysteine proteinases"/>
    <property type="match status" value="1"/>
</dbReference>
<dbReference type="InterPro" id="IPR038765">
    <property type="entry name" value="Papain-like_cys_pep_sf"/>
</dbReference>
<dbReference type="InterPro" id="IPR013128">
    <property type="entry name" value="Peptidase_C1A"/>
</dbReference>
<dbReference type="InterPro" id="IPR000668">
    <property type="entry name" value="Peptidase_C1A_C"/>
</dbReference>
<dbReference type="InterPro" id="IPR039417">
    <property type="entry name" value="Peptidase_C1A_papain-like"/>
</dbReference>
<dbReference type="InterPro" id="IPR013201">
    <property type="entry name" value="Prot_inhib_I29"/>
</dbReference>
<dbReference type="PANTHER" id="PTHR12411">
    <property type="entry name" value="CYSTEINE PROTEASE FAMILY C1-RELATED"/>
    <property type="match status" value="1"/>
</dbReference>
<dbReference type="Pfam" id="PF08246">
    <property type="entry name" value="Inhibitor_I29"/>
    <property type="match status" value="1"/>
</dbReference>
<dbReference type="Pfam" id="PF00112">
    <property type="entry name" value="Peptidase_C1"/>
    <property type="match status" value="1"/>
</dbReference>
<dbReference type="SMART" id="SM00848">
    <property type="entry name" value="Inhibitor_I29"/>
    <property type="match status" value="1"/>
</dbReference>
<dbReference type="SMART" id="SM00645">
    <property type="entry name" value="Pept_C1"/>
    <property type="match status" value="1"/>
</dbReference>
<dbReference type="SUPFAM" id="SSF54001">
    <property type="entry name" value="Cysteine proteinases"/>
    <property type="match status" value="1"/>
</dbReference>
<feature type="signal peptide" evidence="2">
    <location>
        <begin position="1"/>
        <end position="21"/>
    </location>
</feature>
<feature type="propeptide" id="PRO_0000026275" description="Activation peptide" evidence="2">
    <location>
        <begin position="22"/>
        <end position="110"/>
    </location>
</feature>
<feature type="chain" id="PRO_0000026276" description="Putative cathepsin L 3">
    <location>
        <begin position="111"/>
        <end position="308"/>
    </location>
</feature>
<feature type="active site" evidence="1">
    <location>
        <position position="261"/>
    </location>
</feature>
<feature type="active site" evidence="1">
    <location>
        <position position="278"/>
    </location>
</feature>
<feature type="site" description="Ancestral active site Cys">
    <location>
        <position position="132"/>
    </location>
</feature>
<feature type="disulfide bond" evidence="1">
    <location>
        <begin position="129"/>
        <end position="170"/>
    </location>
</feature>
<feature type="disulfide bond" evidence="1">
    <location>
        <begin position="254"/>
        <end position="298"/>
    </location>
</feature>
<proteinExistence type="evidence at transcript level"/>
<keyword id="KW-1015">Disulfide bond</keyword>
<keyword id="KW-0378">Hydrolase</keyword>
<keyword id="KW-0645">Protease</keyword>
<keyword id="KW-1185">Reference proteome</keyword>
<keyword id="KW-0964">Secreted</keyword>
<keyword id="KW-0732">Signal</keyword>
<keyword id="KW-0788">Thiol protease</keyword>
<keyword id="KW-0865">Zymogen</keyword>
<name>CATL3_PARTE</name>
<comment type="function">
    <text>May be involved in extracellular digestion.</text>
</comment>
<comment type="catalytic activity">
    <reaction>
        <text>Specificity close to that of papain. As compared to cathepsin B, cathepsin L exhibits higher activity toward protein substrates, but has little activity on Z-Arg-Arg-NHMec, and no peptidyl-dipeptidase activity.</text>
        <dbReference type="EC" id="3.4.22.15"/>
    </reaction>
</comment>
<comment type="subcellular location">
    <subcellularLocation>
        <location>Secreted</location>
    </subcellularLocation>
</comment>
<comment type="similarity">
    <text evidence="3">Belongs to the peptidase C1 family.</text>
</comment>
<comment type="caution">
    <text evidence="3">This protein may be non-functional as it lacks the cysteine active site residue which is replaced by Gly-132.</text>
</comment>
<gene>
    <name type="ORF">GSPATT00022199001</name>
</gene>
<protein>
    <recommendedName>
        <fullName>Putative cathepsin L 3</fullName>
        <ecNumber>3.4.22.15</ecNumber>
    </recommendedName>
</protein>